<dbReference type="EMBL" id="AE016877">
    <property type="protein sequence ID" value="AAP08174.1"/>
    <property type="molecule type" value="Genomic_DNA"/>
</dbReference>
<dbReference type="RefSeq" id="NP_830973.1">
    <property type="nucleotide sequence ID" value="NC_004722.1"/>
</dbReference>
<dbReference type="SMR" id="Q81GK7"/>
<dbReference type="STRING" id="226900.BC_1188"/>
<dbReference type="KEGG" id="bce:BC1188"/>
<dbReference type="PATRIC" id="fig|226900.8.peg.1155"/>
<dbReference type="HOGENOM" id="CLU_116644_1_1_9"/>
<dbReference type="OrthoDB" id="9794155at2"/>
<dbReference type="PRO" id="PR:Q81GK7"/>
<dbReference type="Proteomes" id="UP000001417">
    <property type="component" value="Chromosome"/>
</dbReference>
<dbReference type="GO" id="GO:0005737">
    <property type="term" value="C:cytoplasm"/>
    <property type="evidence" value="ECO:0007669"/>
    <property type="project" value="UniProtKB-SubCell"/>
</dbReference>
<dbReference type="GO" id="GO:0045892">
    <property type="term" value="P:negative regulation of DNA-templated transcription"/>
    <property type="evidence" value="ECO:0007669"/>
    <property type="project" value="InterPro"/>
</dbReference>
<dbReference type="CDD" id="cd03032">
    <property type="entry name" value="ArsC_Spx"/>
    <property type="match status" value="1"/>
</dbReference>
<dbReference type="Gene3D" id="3.40.30.10">
    <property type="entry name" value="Glutaredoxin"/>
    <property type="match status" value="1"/>
</dbReference>
<dbReference type="HAMAP" id="MF_01132">
    <property type="entry name" value="Spx"/>
    <property type="match status" value="1"/>
</dbReference>
<dbReference type="InterPro" id="IPR006660">
    <property type="entry name" value="Arsenate_reductase-like"/>
</dbReference>
<dbReference type="InterPro" id="IPR023731">
    <property type="entry name" value="Spx"/>
</dbReference>
<dbReference type="InterPro" id="IPR036249">
    <property type="entry name" value="Thioredoxin-like_sf"/>
</dbReference>
<dbReference type="InterPro" id="IPR006504">
    <property type="entry name" value="Tscrpt_reg_Spx/MgsR"/>
</dbReference>
<dbReference type="NCBIfam" id="TIGR01617">
    <property type="entry name" value="arsC_related"/>
    <property type="match status" value="1"/>
</dbReference>
<dbReference type="NCBIfam" id="NF002459">
    <property type="entry name" value="PRK01655.1"/>
    <property type="match status" value="1"/>
</dbReference>
<dbReference type="NCBIfam" id="NF009210">
    <property type="entry name" value="PRK12559.1"/>
    <property type="match status" value="1"/>
</dbReference>
<dbReference type="PANTHER" id="PTHR30041">
    <property type="entry name" value="ARSENATE REDUCTASE"/>
    <property type="match status" value="1"/>
</dbReference>
<dbReference type="PANTHER" id="PTHR30041:SF7">
    <property type="entry name" value="GLOBAL TRANSCRIPTIONAL REGULATOR SPX"/>
    <property type="match status" value="1"/>
</dbReference>
<dbReference type="Pfam" id="PF03960">
    <property type="entry name" value="ArsC"/>
    <property type="match status" value="1"/>
</dbReference>
<dbReference type="SUPFAM" id="SSF52833">
    <property type="entry name" value="Thioredoxin-like"/>
    <property type="match status" value="1"/>
</dbReference>
<dbReference type="PROSITE" id="PS51353">
    <property type="entry name" value="ARSC"/>
    <property type="match status" value="1"/>
</dbReference>
<organism>
    <name type="scientific">Bacillus cereus (strain ATCC 14579 / DSM 31 / CCUG 7414 / JCM 2152 / NBRC 15305 / NCIMB 9373 / NCTC 2599 / NRRL B-3711)</name>
    <dbReference type="NCBI Taxonomy" id="226900"/>
    <lineage>
        <taxon>Bacteria</taxon>
        <taxon>Bacillati</taxon>
        <taxon>Bacillota</taxon>
        <taxon>Bacilli</taxon>
        <taxon>Bacillales</taxon>
        <taxon>Bacillaceae</taxon>
        <taxon>Bacillus</taxon>
        <taxon>Bacillus cereus group</taxon>
    </lineage>
</organism>
<feature type="chain" id="PRO_0000162547" description="Global transcriptional regulator Spx 1">
    <location>
        <begin position="1"/>
        <end position="131"/>
    </location>
</feature>
<feature type="disulfide bond" description="Redox-active" evidence="1">
    <location>
        <begin position="10"/>
        <end position="13"/>
    </location>
</feature>
<reference key="1">
    <citation type="journal article" date="2003" name="Nature">
        <title>Genome sequence of Bacillus cereus and comparative analysis with Bacillus anthracis.</title>
        <authorList>
            <person name="Ivanova N."/>
            <person name="Sorokin A."/>
            <person name="Anderson I."/>
            <person name="Galleron N."/>
            <person name="Candelon B."/>
            <person name="Kapatral V."/>
            <person name="Bhattacharyya A."/>
            <person name="Reznik G."/>
            <person name="Mikhailova N."/>
            <person name="Lapidus A."/>
            <person name="Chu L."/>
            <person name="Mazur M."/>
            <person name="Goltsman E."/>
            <person name="Larsen N."/>
            <person name="D'Souza M."/>
            <person name="Walunas T."/>
            <person name="Grechkin Y."/>
            <person name="Pusch G."/>
            <person name="Haselkorn R."/>
            <person name="Fonstein M."/>
            <person name="Ehrlich S.D."/>
            <person name="Overbeek R."/>
            <person name="Kyrpides N.C."/>
        </authorList>
    </citation>
    <scope>NUCLEOTIDE SEQUENCE [LARGE SCALE GENOMIC DNA]</scope>
    <source>
        <strain>ATCC 14579 / DSM 31 / CCUG 7414 / JCM 2152 / NBRC 15305 / NCIMB 9373 / NCTC 2599 / NRRL B-3711</strain>
    </source>
</reference>
<evidence type="ECO:0000255" key="1">
    <source>
        <dbReference type="HAMAP-Rule" id="MF_01132"/>
    </source>
</evidence>
<proteinExistence type="inferred from homology"/>
<protein>
    <recommendedName>
        <fullName evidence="1">Global transcriptional regulator Spx 1</fullName>
    </recommendedName>
</protein>
<comment type="function">
    <text evidence="1">Global transcriptional regulator that plays a key role in stress response and exerts either positive or negative regulation of genes. Acts by interacting with the C-terminal domain of the alpha subunit of the RNA polymerase (RNAP). This interaction can enhance binding of RNAP to the promoter region of target genes and stimulate their transcription, or block interaction of RNAP with activator.</text>
</comment>
<comment type="subunit">
    <text evidence="1">Interacts with the C-terminal domain of the alpha subunit of the RNAP.</text>
</comment>
<comment type="subcellular location">
    <subcellularLocation>
        <location evidence="1">Cytoplasm</location>
    </subcellularLocation>
</comment>
<comment type="similarity">
    <text evidence="1">Belongs to the ArsC family. Spx subfamily.</text>
</comment>
<accession>Q81GK7</accession>
<sequence>MVTLYSSPSCTSCRKAKLWLEENHIPYTERNIFSDPLTIEEIKEILRMTESGTDEIISTRSKVFQELNVNLESLPLQDLYKMIRDYPGILRRPIMIDEKRLQVGYNEDEIRRFLPRTVRTFQLREAQRLVN</sequence>
<name>SPX1_BACCR</name>
<keyword id="KW-0963">Cytoplasm</keyword>
<keyword id="KW-1015">Disulfide bond</keyword>
<keyword id="KW-0676">Redox-active center</keyword>
<keyword id="KW-1185">Reference proteome</keyword>
<keyword id="KW-0804">Transcription</keyword>
<keyword id="KW-0805">Transcription regulation</keyword>
<gene>
    <name evidence="1" type="primary">spx1</name>
    <name type="ordered locus">BC_1188</name>
</gene>